<name>HAC5_ASPFC</name>
<sequence>MGLCVRSSINIPYFHYAMIYLDNMGRLKVMESPSIQEQNETVFTTEVRERFLEILGAKVGYQPPMVRSIYDPQQPLGCLSYRQTKRDRNSPAHSMYGVPPSVQFSAPVEESPSCGSVDMVGLEIGDTPNVLDYYERSLKHFRQVNCRQILKTFIKFIEPRKQAKHPYNGGKPPAGAPPGKKGDPEKTKPEWWPANVVHKEPDHLRKDRTCNPSENLQCQVTLLTDLERLSLLIHIIRRLGRFGITTDQLQEIAHDCKRRLSDPHKLQILDEVFRVRRIEERYERGEVDANKIVYVVNRESNQKEKDGDSNVDPDQKHEQEDDNAREALPILHSEKNSTSPMSNSAEHTGMAAPSRPMNMGGDRNQLFPLPEWPSFGETPQDDRIFFPTTSKYTEDYASQQMPRTPATTALVSTNETHAAFDYMTQESITSSSPEQTSHHRQAPLPMQHSASLDPWTPTFRHNFFNPMVYSTAPRHAMSQATMLSQFPRSTTSHGQEMPHMAHGLPNLPQDRPSSMDGMSMRGPSFRTGFLSHPCDPSQQAPHSSGCGHPDSWTQNRPHV</sequence>
<reference key="1">
    <citation type="journal article" date="2008" name="PLoS Genet.">
        <title>Genomic islands in the pathogenic filamentous fungus Aspergillus fumigatus.</title>
        <authorList>
            <person name="Fedorova N.D."/>
            <person name="Khaldi N."/>
            <person name="Joardar V.S."/>
            <person name="Maiti R."/>
            <person name="Amedeo P."/>
            <person name="Anderson M.J."/>
            <person name="Crabtree J."/>
            <person name="Silva J.C."/>
            <person name="Badger J.H."/>
            <person name="Albarraq A."/>
            <person name="Angiuoli S."/>
            <person name="Bussey H."/>
            <person name="Bowyer P."/>
            <person name="Cotty P.J."/>
            <person name="Dyer P.S."/>
            <person name="Egan A."/>
            <person name="Galens K."/>
            <person name="Fraser-Liggett C.M."/>
            <person name="Haas B.J."/>
            <person name="Inman J.M."/>
            <person name="Kent R."/>
            <person name="Lemieux S."/>
            <person name="Malavazi I."/>
            <person name="Orvis J."/>
            <person name="Roemer T."/>
            <person name="Ronning C.M."/>
            <person name="Sundaram J.P."/>
            <person name="Sutton G."/>
            <person name="Turner G."/>
            <person name="Venter J.C."/>
            <person name="White O.R."/>
            <person name="Whitty B.R."/>
            <person name="Youngman P."/>
            <person name="Wolfe K.H."/>
            <person name="Goldman G.H."/>
            <person name="Wortman J.R."/>
            <person name="Jiang B."/>
            <person name="Denning D.W."/>
            <person name="Nierman W.C."/>
        </authorList>
    </citation>
    <scope>NUCLEOTIDE SEQUENCE [LARGE SCALE GENOMIC DNA]</scope>
    <source>
        <strain>CBS 144.89 / FGSC A1163 / CEA10</strain>
    </source>
</reference>
<reference key="2">
    <citation type="journal article" date="2019" name="Nat. Microbiol.">
        <title>Fungal biofilm morphology impacts hypoxia fitness and disease progression.</title>
        <authorList>
            <person name="Kowalski C.H."/>
            <person name="Kerkaert J.D."/>
            <person name="Liu K.W."/>
            <person name="Bond M.C."/>
            <person name="Hartmann R."/>
            <person name="Nadell C.D."/>
            <person name="Stajich J.E."/>
            <person name="Cramer R.A."/>
        </authorList>
    </citation>
    <scope>FUNCTION</scope>
    <scope>INDUCTION</scope>
</reference>
<keyword id="KW-0130">Cell adhesion</keyword>
<keyword id="KW-0843">Virulence</keyword>
<proteinExistence type="evidence at transcript level"/>
<feature type="chain" id="PRO_0000460424" description="Subtelomeric hrmA-associated cluster protein AFUB_079030">
    <location>
        <begin position="1"/>
        <end position="559"/>
    </location>
</feature>
<feature type="region of interest" description="Disordered" evidence="1">
    <location>
        <begin position="163"/>
        <end position="190"/>
    </location>
</feature>
<feature type="region of interest" description="Disordered" evidence="1">
    <location>
        <begin position="298"/>
        <end position="351"/>
    </location>
</feature>
<feature type="region of interest" description="Disordered" evidence="1">
    <location>
        <begin position="427"/>
        <end position="451"/>
    </location>
</feature>
<feature type="region of interest" description="Disordered" evidence="1">
    <location>
        <begin position="525"/>
        <end position="559"/>
    </location>
</feature>
<feature type="compositionally biased region" description="Low complexity" evidence="1">
    <location>
        <begin position="169"/>
        <end position="179"/>
    </location>
</feature>
<feature type="compositionally biased region" description="Basic and acidic residues" evidence="1">
    <location>
        <begin position="180"/>
        <end position="189"/>
    </location>
</feature>
<feature type="compositionally biased region" description="Basic and acidic residues" evidence="1">
    <location>
        <begin position="300"/>
        <end position="325"/>
    </location>
</feature>
<feature type="compositionally biased region" description="Polar residues" evidence="1">
    <location>
        <begin position="336"/>
        <end position="346"/>
    </location>
</feature>
<comment type="function">
    <text evidence="2">Part of the subtelomeric hrmA-associated cluster (HAC) containing genes that alter the hyphal surface (such as reduced total chitin or increased beta-glucan exposure) and perturb inter-hyphal interactions within the developing biofilms, resulting in a loss of vertically aligned polarized growing filaments (PubMed:31548684). Consequently, this hypoxia-typic morphotype (called H-MORPH) with altered biofilm architecture leads to increased hypoxia fitness, increased host inflammation, rapid disease progression, and mortality in a murine model of invasive aspergillosis (PubMed:31548684).</text>
</comment>
<comment type="induction">
    <text evidence="2">Expression is regulated by the hypoxia responsive morphology factor A (hrmA).</text>
</comment>
<dbReference type="EMBL" id="DS499599">
    <property type="protein sequence ID" value="EDP49870.1"/>
    <property type="molecule type" value="Genomic_DNA"/>
</dbReference>
<dbReference type="EnsemblFungi" id="EDP49870">
    <property type="protein sequence ID" value="EDP49870"/>
    <property type="gene ID" value="AFUB_079030"/>
</dbReference>
<dbReference type="VEuPathDB" id="FungiDB:AFUB_079030"/>
<dbReference type="HOGENOM" id="CLU_035142_2_0_1"/>
<dbReference type="OrthoDB" id="90048at5052"/>
<dbReference type="PhylomeDB" id="B0Y8Y9"/>
<dbReference type="Proteomes" id="UP000001699">
    <property type="component" value="Unassembled WGS sequence"/>
</dbReference>
<dbReference type="GO" id="GO:0007155">
    <property type="term" value="P:cell adhesion"/>
    <property type="evidence" value="ECO:0007669"/>
    <property type="project" value="UniProtKB-KW"/>
</dbReference>
<dbReference type="InterPro" id="IPR047092">
    <property type="entry name" value="AFUB_07903/YDR124W-like_hel"/>
</dbReference>
<dbReference type="InterPro" id="IPR021264">
    <property type="entry name" value="AFUB_079030/YDR124W-like"/>
</dbReference>
<dbReference type="PANTHER" id="PTHR36102">
    <property type="entry name" value="CHROMOSOME 10, WHOLE GENOME SHOTGUN SEQUENCE"/>
    <property type="match status" value="1"/>
</dbReference>
<dbReference type="PANTHER" id="PTHR36102:SF5">
    <property type="entry name" value="YDR124W-LIKE HELICAL BUNDLE DOMAIN-CONTAINING PROTEIN"/>
    <property type="match status" value="1"/>
</dbReference>
<dbReference type="Pfam" id="PF11001">
    <property type="entry name" value="AFUB_07903_YDR124W_hel"/>
    <property type="match status" value="1"/>
</dbReference>
<accession>B0Y8Y9</accession>
<gene>
    <name type="ORF">AFUB_079030</name>
</gene>
<protein>
    <recommendedName>
        <fullName evidence="3">Subtelomeric hrmA-associated cluster protein AFUB_079030</fullName>
    </recommendedName>
</protein>
<organism>
    <name type="scientific">Aspergillus fumigatus (strain CBS 144.89 / FGSC A1163 / CEA10)</name>
    <name type="common">Neosartorya fumigata</name>
    <dbReference type="NCBI Taxonomy" id="451804"/>
    <lineage>
        <taxon>Eukaryota</taxon>
        <taxon>Fungi</taxon>
        <taxon>Dikarya</taxon>
        <taxon>Ascomycota</taxon>
        <taxon>Pezizomycotina</taxon>
        <taxon>Eurotiomycetes</taxon>
        <taxon>Eurotiomycetidae</taxon>
        <taxon>Eurotiales</taxon>
        <taxon>Aspergillaceae</taxon>
        <taxon>Aspergillus</taxon>
        <taxon>Aspergillus subgen. Fumigati</taxon>
    </lineage>
</organism>
<evidence type="ECO:0000256" key="1">
    <source>
        <dbReference type="SAM" id="MobiDB-lite"/>
    </source>
</evidence>
<evidence type="ECO:0000269" key="2">
    <source>
    </source>
</evidence>
<evidence type="ECO:0000303" key="3">
    <source>
    </source>
</evidence>